<gene>
    <name evidence="1" type="primary">comB</name>
    <name type="ordered locus">CYA_0651</name>
</gene>
<name>COMB_SYNJA</name>
<evidence type="ECO:0000255" key="1">
    <source>
        <dbReference type="HAMAP-Rule" id="MF_00490"/>
    </source>
</evidence>
<proteinExistence type="inferred from homology"/>
<dbReference type="EC" id="3.1.3.71" evidence="1"/>
<dbReference type="EMBL" id="CP000239">
    <property type="protein sequence ID" value="ABC98864.1"/>
    <property type="molecule type" value="Genomic_DNA"/>
</dbReference>
<dbReference type="RefSeq" id="WP_011429547.1">
    <property type="nucleotide sequence ID" value="NC_007775.1"/>
</dbReference>
<dbReference type="SMR" id="Q2JWJ9"/>
<dbReference type="STRING" id="321327.CYA_0651"/>
<dbReference type="KEGG" id="cya:CYA_0651"/>
<dbReference type="eggNOG" id="COG2045">
    <property type="taxonomic scope" value="Bacteria"/>
</dbReference>
<dbReference type="HOGENOM" id="CLU_070028_0_1_3"/>
<dbReference type="OrthoDB" id="4913at2"/>
<dbReference type="Proteomes" id="UP000008818">
    <property type="component" value="Chromosome"/>
</dbReference>
<dbReference type="GO" id="GO:0050532">
    <property type="term" value="F:2-phosphosulfolactate phosphatase activity"/>
    <property type="evidence" value="ECO:0007669"/>
    <property type="project" value="UniProtKB-UniRule"/>
</dbReference>
<dbReference type="GO" id="GO:0000287">
    <property type="term" value="F:magnesium ion binding"/>
    <property type="evidence" value="ECO:0007669"/>
    <property type="project" value="UniProtKB-UniRule"/>
</dbReference>
<dbReference type="GO" id="GO:0050545">
    <property type="term" value="F:sulfopyruvate decarboxylase activity"/>
    <property type="evidence" value="ECO:0007669"/>
    <property type="project" value="TreeGrafter"/>
</dbReference>
<dbReference type="FunFam" id="3.90.1560.10:FF:000001">
    <property type="entry name" value="Probable 2-phosphosulfolactate phosphatase"/>
    <property type="match status" value="1"/>
</dbReference>
<dbReference type="Gene3D" id="3.90.1560.10">
    <property type="entry name" value="ComB-like"/>
    <property type="match status" value="1"/>
</dbReference>
<dbReference type="HAMAP" id="MF_00490">
    <property type="entry name" value="ComB"/>
    <property type="match status" value="1"/>
</dbReference>
<dbReference type="InterPro" id="IPR005238">
    <property type="entry name" value="ComB-like"/>
</dbReference>
<dbReference type="InterPro" id="IPR036702">
    <property type="entry name" value="ComB-like_sf"/>
</dbReference>
<dbReference type="NCBIfam" id="NF002056">
    <property type="entry name" value="PRK00886.1-5"/>
    <property type="match status" value="1"/>
</dbReference>
<dbReference type="PANTHER" id="PTHR37311">
    <property type="entry name" value="2-PHOSPHOSULFOLACTATE PHOSPHATASE-RELATED"/>
    <property type="match status" value="1"/>
</dbReference>
<dbReference type="PANTHER" id="PTHR37311:SF1">
    <property type="entry name" value="2-PHOSPHOSULFOLACTATE PHOSPHATASE-RELATED"/>
    <property type="match status" value="1"/>
</dbReference>
<dbReference type="Pfam" id="PF04029">
    <property type="entry name" value="2-ph_phosp"/>
    <property type="match status" value="1"/>
</dbReference>
<dbReference type="SUPFAM" id="SSF142823">
    <property type="entry name" value="ComB-like"/>
    <property type="match status" value="1"/>
</dbReference>
<sequence length="242" mass="25943">MQLFHFHTPEQVPPAGIPACAVAIDVLRATTTIAAALAAGAEAVEVFADLQSLQAASRSWPASKRLLAGERGGKTVTGFDLGNSPREYTPERVRDQRIFMSTTNGTRTLQRLERIPVVITAALVNLGAVVEFLRRGAFAEVWLVGSGWEGAFALEDTACAGAVLHRLGCSWEQLGNDEAVAALALYQTWQDNLLGLLRRSSHGQRLLAISPENDSDLAYCAKLDRLSVVPQQVQPGVLALAG</sequence>
<accession>Q2JWJ9</accession>
<keyword id="KW-0378">Hydrolase</keyword>
<keyword id="KW-0460">Magnesium</keyword>
<comment type="catalytic activity">
    <reaction evidence="1">
        <text>(2R)-O-phospho-3-sulfolactate + H2O = (2R)-3-sulfolactate + phosphate</text>
        <dbReference type="Rhea" id="RHEA:23416"/>
        <dbReference type="ChEBI" id="CHEBI:15377"/>
        <dbReference type="ChEBI" id="CHEBI:15597"/>
        <dbReference type="ChEBI" id="CHEBI:43474"/>
        <dbReference type="ChEBI" id="CHEBI:58738"/>
        <dbReference type="EC" id="3.1.3.71"/>
    </reaction>
</comment>
<comment type="cofactor">
    <cofactor evidence="1">
        <name>Mg(2+)</name>
        <dbReference type="ChEBI" id="CHEBI:18420"/>
    </cofactor>
</comment>
<comment type="similarity">
    <text evidence="1">Belongs to the ComB family.</text>
</comment>
<feature type="chain" id="PRO_1000014469" description="Probable 2-phosphosulfolactate phosphatase">
    <location>
        <begin position="1"/>
        <end position="242"/>
    </location>
</feature>
<reference key="1">
    <citation type="journal article" date="2007" name="ISME J.">
        <title>Population level functional diversity in a microbial community revealed by comparative genomic and metagenomic analyses.</title>
        <authorList>
            <person name="Bhaya D."/>
            <person name="Grossman A.R."/>
            <person name="Steunou A.-S."/>
            <person name="Khuri N."/>
            <person name="Cohan F.M."/>
            <person name="Hamamura N."/>
            <person name="Melendrez M.C."/>
            <person name="Bateson M.M."/>
            <person name="Ward D.M."/>
            <person name="Heidelberg J.F."/>
        </authorList>
    </citation>
    <scope>NUCLEOTIDE SEQUENCE [LARGE SCALE GENOMIC DNA]</scope>
    <source>
        <strain>JA-3-3Ab</strain>
    </source>
</reference>
<protein>
    <recommendedName>
        <fullName evidence="1">Probable 2-phosphosulfolactate phosphatase</fullName>
        <ecNumber evidence="1">3.1.3.71</ecNumber>
    </recommendedName>
</protein>
<organism>
    <name type="scientific">Synechococcus sp. (strain JA-3-3Ab)</name>
    <name type="common">Cyanobacteria bacterium Yellowstone A-Prime</name>
    <dbReference type="NCBI Taxonomy" id="321327"/>
    <lineage>
        <taxon>Bacteria</taxon>
        <taxon>Bacillati</taxon>
        <taxon>Cyanobacteriota</taxon>
        <taxon>Cyanophyceae</taxon>
        <taxon>Synechococcales</taxon>
        <taxon>Synechococcaceae</taxon>
        <taxon>Synechococcus</taxon>
    </lineage>
</organism>